<organism>
    <name type="scientific">Salmonella paratyphi C (strain RKS4594)</name>
    <dbReference type="NCBI Taxonomy" id="476213"/>
    <lineage>
        <taxon>Bacteria</taxon>
        <taxon>Pseudomonadati</taxon>
        <taxon>Pseudomonadota</taxon>
        <taxon>Gammaproteobacteria</taxon>
        <taxon>Enterobacterales</taxon>
        <taxon>Enterobacteriaceae</taxon>
        <taxon>Salmonella</taxon>
    </lineage>
</organism>
<proteinExistence type="inferred from homology"/>
<accession>C0Q783</accession>
<reference key="1">
    <citation type="journal article" date="2009" name="PLoS ONE">
        <title>Salmonella paratyphi C: genetic divergence from Salmonella choleraesuis and pathogenic convergence with Salmonella typhi.</title>
        <authorList>
            <person name="Liu W.-Q."/>
            <person name="Feng Y."/>
            <person name="Wang Y."/>
            <person name="Zou Q.-H."/>
            <person name="Chen F."/>
            <person name="Guo J.-T."/>
            <person name="Peng Y.-H."/>
            <person name="Jin Y."/>
            <person name="Li Y.-G."/>
            <person name="Hu S.-N."/>
            <person name="Johnston R.N."/>
            <person name="Liu G.-R."/>
            <person name="Liu S.-L."/>
        </authorList>
    </citation>
    <scope>NUCLEOTIDE SEQUENCE [LARGE SCALE GENOMIC DNA]</scope>
    <source>
        <strain>RKS4594</strain>
    </source>
</reference>
<protein>
    <recommendedName>
        <fullName evidence="1">UPF0227 protein YcfP</fullName>
    </recommendedName>
</protein>
<dbReference type="EMBL" id="CP000857">
    <property type="protein sequence ID" value="ACN46641.1"/>
    <property type="molecule type" value="Genomic_DNA"/>
</dbReference>
<dbReference type="RefSeq" id="WP_000587945.1">
    <property type="nucleotide sequence ID" value="NC_012125.1"/>
</dbReference>
<dbReference type="SMR" id="C0Q783"/>
<dbReference type="ESTHER" id="salty-ycfp">
    <property type="family name" value="abh_upf00227"/>
</dbReference>
<dbReference type="KEGG" id="sei:SPC_2536"/>
<dbReference type="HOGENOM" id="CLU_128769_0_0_6"/>
<dbReference type="Proteomes" id="UP000001599">
    <property type="component" value="Chromosome"/>
</dbReference>
<dbReference type="FunFam" id="3.40.50.1820:FF:000007">
    <property type="entry name" value="UPF0227 protein YcfP"/>
    <property type="match status" value="1"/>
</dbReference>
<dbReference type="Gene3D" id="3.40.50.1820">
    <property type="entry name" value="alpha/beta hydrolase"/>
    <property type="match status" value="1"/>
</dbReference>
<dbReference type="HAMAP" id="MF_01047">
    <property type="entry name" value="UPF0227"/>
    <property type="match status" value="1"/>
</dbReference>
<dbReference type="InterPro" id="IPR029058">
    <property type="entry name" value="AB_hydrolase_fold"/>
</dbReference>
<dbReference type="InterPro" id="IPR022987">
    <property type="entry name" value="UPF0227"/>
</dbReference>
<dbReference type="InterPro" id="IPR008886">
    <property type="entry name" value="UPF0227/Esterase_YqiA"/>
</dbReference>
<dbReference type="NCBIfam" id="NF003431">
    <property type="entry name" value="PRK04940.1"/>
    <property type="match status" value="1"/>
</dbReference>
<dbReference type="PANTHER" id="PTHR35602">
    <property type="entry name" value="ESTERASE YQIA-RELATED"/>
    <property type="match status" value="1"/>
</dbReference>
<dbReference type="PANTHER" id="PTHR35602:SF2">
    <property type="entry name" value="UPF0227 PROTEIN YCFP"/>
    <property type="match status" value="1"/>
</dbReference>
<dbReference type="Pfam" id="PF05728">
    <property type="entry name" value="UPF0227"/>
    <property type="match status" value="1"/>
</dbReference>
<dbReference type="SUPFAM" id="SSF53474">
    <property type="entry name" value="alpha/beta-Hydrolases"/>
    <property type="match status" value="1"/>
</dbReference>
<name>YCFP_SALPC</name>
<comment type="similarity">
    <text evidence="1">Belongs to the UPF0227 family.</text>
</comment>
<sequence>MIIYLHGFDSNSPGNHEKVLQLQFIDPDVRLVSYSTRHPKHDMQHLLKEVDKMLQLNVDERPLICGVGLGGYWAERIGFLCDIRQVVFNPNLFPYENMEGKIDRPEEYADIATKCVTNFREKNRDRCLVILSRHDEALDSQRSAQALHPYYEIVWDEEQTHKFKNISPHLQRIKAFKTLG</sequence>
<gene>
    <name evidence="1" type="primary">ycfP</name>
    <name type="ordered locus">SPC_2536</name>
</gene>
<feature type="chain" id="PRO_1000149608" description="UPF0227 protein YcfP">
    <location>
        <begin position="1"/>
        <end position="180"/>
    </location>
</feature>
<evidence type="ECO:0000255" key="1">
    <source>
        <dbReference type="HAMAP-Rule" id="MF_01047"/>
    </source>
</evidence>